<comment type="function">
    <text evidence="1">Cell wall formation.</text>
</comment>
<comment type="catalytic activity">
    <reaction evidence="1">
        <text>UDP-N-acetyl-alpha-D-muramate + L-alanine + ATP = UDP-N-acetyl-alpha-D-muramoyl-L-alanine + ADP + phosphate + H(+)</text>
        <dbReference type="Rhea" id="RHEA:23372"/>
        <dbReference type="ChEBI" id="CHEBI:15378"/>
        <dbReference type="ChEBI" id="CHEBI:30616"/>
        <dbReference type="ChEBI" id="CHEBI:43474"/>
        <dbReference type="ChEBI" id="CHEBI:57972"/>
        <dbReference type="ChEBI" id="CHEBI:70757"/>
        <dbReference type="ChEBI" id="CHEBI:83898"/>
        <dbReference type="ChEBI" id="CHEBI:456216"/>
        <dbReference type="EC" id="6.3.2.8"/>
    </reaction>
</comment>
<comment type="pathway">
    <text evidence="1">Cell wall biogenesis; peptidoglycan biosynthesis.</text>
</comment>
<comment type="subcellular location">
    <subcellularLocation>
        <location evidence="1">Cytoplasm</location>
    </subcellularLocation>
</comment>
<comment type="similarity">
    <text evidence="1">Belongs to the MurCDEF family.</text>
</comment>
<gene>
    <name evidence="1" type="primary">murC</name>
    <name type="ordered locus">RoseRS_3788</name>
</gene>
<keyword id="KW-0067">ATP-binding</keyword>
<keyword id="KW-0131">Cell cycle</keyword>
<keyword id="KW-0132">Cell division</keyword>
<keyword id="KW-0133">Cell shape</keyword>
<keyword id="KW-0961">Cell wall biogenesis/degradation</keyword>
<keyword id="KW-0963">Cytoplasm</keyword>
<keyword id="KW-0436">Ligase</keyword>
<keyword id="KW-0547">Nucleotide-binding</keyword>
<keyword id="KW-0573">Peptidoglycan synthesis</keyword>
<organism>
    <name type="scientific">Roseiflexus sp. (strain RS-1)</name>
    <dbReference type="NCBI Taxonomy" id="357808"/>
    <lineage>
        <taxon>Bacteria</taxon>
        <taxon>Bacillati</taxon>
        <taxon>Chloroflexota</taxon>
        <taxon>Chloroflexia</taxon>
        <taxon>Chloroflexales</taxon>
        <taxon>Roseiflexineae</taxon>
        <taxon>Roseiflexaceae</taxon>
        <taxon>Roseiflexus</taxon>
    </lineage>
</organism>
<dbReference type="EC" id="6.3.2.8" evidence="1"/>
<dbReference type="EMBL" id="CP000686">
    <property type="protein sequence ID" value="ABQ92142.1"/>
    <property type="molecule type" value="Genomic_DNA"/>
</dbReference>
<dbReference type="RefSeq" id="WP_011958484.1">
    <property type="nucleotide sequence ID" value="NC_009523.1"/>
</dbReference>
<dbReference type="SMR" id="A5UZT9"/>
<dbReference type="STRING" id="357808.RoseRS_3788"/>
<dbReference type="KEGG" id="rrs:RoseRS_3788"/>
<dbReference type="eggNOG" id="COG0773">
    <property type="taxonomic scope" value="Bacteria"/>
</dbReference>
<dbReference type="HOGENOM" id="CLU_028104_2_0_0"/>
<dbReference type="OrthoDB" id="9804126at2"/>
<dbReference type="UniPathway" id="UPA00219"/>
<dbReference type="Proteomes" id="UP000006554">
    <property type="component" value="Chromosome"/>
</dbReference>
<dbReference type="GO" id="GO:0005737">
    <property type="term" value="C:cytoplasm"/>
    <property type="evidence" value="ECO:0007669"/>
    <property type="project" value="UniProtKB-SubCell"/>
</dbReference>
<dbReference type="GO" id="GO:0005524">
    <property type="term" value="F:ATP binding"/>
    <property type="evidence" value="ECO:0007669"/>
    <property type="project" value="UniProtKB-UniRule"/>
</dbReference>
<dbReference type="GO" id="GO:0008763">
    <property type="term" value="F:UDP-N-acetylmuramate-L-alanine ligase activity"/>
    <property type="evidence" value="ECO:0007669"/>
    <property type="project" value="UniProtKB-UniRule"/>
</dbReference>
<dbReference type="GO" id="GO:0051301">
    <property type="term" value="P:cell division"/>
    <property type="evidence" value="ECO:0007669"/>
    <property type="project" value="UniProtKB-KW"/>
</dbReference>
<dbReference type="GO" id="GO:0071555">
    <property type="term" value="P:cell wall organization"/>
    <property type="evidence" value="ECO:0007669"/>
    <property type="project" value="UniProtKB-KW"/>
</dbReference>
<dbReference type="GO" id="GO:0009252">
    <property type="term" value="P:peptidoglycan biosynthetic process"/>
    <property type="evidence" value="ECO:0007669"/>
    <property type="project" value="UniProtKB-UniRule"/>
</dbReference>
<dbReference type="GO" id="GO:0008360">
    <property type="term" value="P:regulation of cell shape"/>
    <property type="evidence" value="ECO:0007669"/>
    <property type="project" value="UniProtKB-KW"/>
</dbReference>
<dbReference type="Gene3D" id="3.90.190.20">
    <property type="entry name" value="Mur ligase, C-terminal domain"/>
    <property type="match status" value="1"/>
</dbReference>
<dbReference type="Gene3D" id="3.40.1190.10">
    <property type="entry name" value="Mur-like, catalytic domain"/>
    <property type="match status" value="1"/>
</dbReference>
<dbReference type="Gene3D" id="3.40.50.720">
    <property type="entry name" value="NAD(P)-binding Rossmann-like Domain"/>
    <property type="match status" value="1"/>
</dbReference>
<dbReference type="HAMAP" id="MF_00046">
    <property type="entry name" value="MurC"/>
    <property type="match status" value="1"/>
</dbReference>
<dbReference type="InterPro" id="IPR036565">
    <property type="entry name" value="Mur-like_cat_sf"/>
</dbReference>
<dbReference type="InterPro" id="IPR004101">
    <property type="entry name" value="Mur_ligase_C"/>
</dbReference>
<dbReference type="InterPro" id="IPR036615">
    <property type="entry name" value="Mur_ligase_C_dom_sf"/>
</dbReference>
<dbReference type="InterPro" id="IPR013221">
    <property type="entry name" value="Mur_ligase_cen"/>
</dbReference>
<dbReference type="InterPro" id="IPR000713">
    <property type="entry name" value="Mur_ligase_N"/>
</dbReference>
<dbReference type="InterPro" id="IPR050061">
    <property type="entry name" value="MurCDEF_pg_biosynth"/>
</dbReference>
<dbReference type="InterPro" id="IPR005758">
    <property type="entry name" value="UDP-N-AcMur_Ala_ligase_MurC"/>
</dbReference>
<dbReference type="NCBIfam" id="TIGR01082">
    <property type="entry name" value="murC"/>
    <property type="match status" value="1"/>
</dbReference>
<dbReference type="PANTHER" id="PTHR43445:SF3">
    <property type="entry name" value="UDP-N-ACETYLMURAMATE--L-ALANINE LIGASE"/>
    <property type="match status" value="1"/>
</dbReference>
<dbReference type="PANTHER" id="PTHR43445">
    <property type="entry name" value="UDP-N-ACETYLMURAMATE--L-ALANINE LIGASE-RELATED"/>
    <property type="match status" value="1"/>
</dbReference>
<dbReference type="Pfam" id="PF01225">
    <property type="entry name" value="Mur_ligase"/>
    <property type="match status" value="1"/>
</dbReference>
<dbReference type="Pfam" id="PF02875">
    <property type="entry name" value="Mur_ligase_C"/>
    <property type="match status" value="1"/>
</dbReference>
<dbReference type="Pfam" id="PF08245">
    <property type="entry name" value="Mur_ligase_M"/>
    <property type="match status" value="1"/>
</dbReference>
<dbReference type="SUPFAM" id="SSF51984">
    <property type="entry name" value="MurCD N-terminal domain"/>
    <property type="match status" value="1"/>
</dbReference>
<dbReference type="SUPFAM" id="SSF53623">
    <property type="entry name" value="MurD-like peptide ligases, catalytic domain"/>
    <property type="match status" value="1"/>
</dbReference>
<dbReference type="SUPFAM" id="SSF53244">
    <property type="entry name" value="MurD-like peptide ligases, peptide-binding domain"/>
    <property type="match status" value="1"/>
</dbReference>
<reference key="1">
    <citation type="submission" date="2007-04" db="EMBL/GenBank/DDBJ databases">
        <title>Complete sequence of Roseiflexus sp. RS-1.</title>
        <authorList>
            <consortium name="US DOE Joint Genome Institute"/>
            <person name="Copeland A."/>
            <person name="Lucas S."/>
            <person name="Lapidus A."/>
            <person name="Barry K."/>
            <person name="Detter J.C."/>
            <person name="Glavina del Rio T."/>
            <person name="Hammon N."/>
            <person name="Israni S."/>
            <person name="Dalin E."/>
            <person name="Tice H."/>
            <person name="Pitluck S."/>
            <person name="Chertkov O."/>
            <person name="Brettin T."/>
            <person name="Bruce D."/>
            <person name="Han C."/>
            <person name="Schmutz J."/>
            <person name="Larimer F."/>
            <person name="Land M."/>
            <person name="Hauser L."/>
            <person name="Kyrpides N."/>
            <person name="Mikhailova N."/>
            <person name="Bryant D.A."/>
            <person name="Richardson P."/>
        </authorList>
    </citation>
    <scope>NUCLEOTIDE SEQUENCE [LARGE SCALE GENOMIC DNA]</scope>
    <source>
        <strain>RS-1</strain>
    </source>
</reference>
<feature type="chain" id="PRO_0000336864" description="UDP-N-acetylmuramate--L-alanine ligase">
    <location>
        <begin position="1"/>
        <end position="468"/>
    </location>
</feature>
<feature type="binding site" evidence="1">
    <location>
        <begin position="107"/>
        <end position="113"/>
    </location>
    <ligand>
        <name>ATP</name>
        <dbReference type="ChEBI" id="CHEBI:30616"/>
    </ligand>
</feature>
<name>MURC_ROSS1</name>
<accession>A5UZT9</accession>
<protein>
    <recommendedName>
        <fullName evidence="1">UDP-N-acetylmuramate--L-alanine ligase</fullName>
        <ecNumber evidence="1">6.3.2.8</ecNumber>
    </recommendedName>
    <alternativeName>
        <fullName evidence="1">UDP-N-acetylmuramoyl-L-alanine synthetase</fullName>
    </alternativeName>
</protein>
<sequence length="468" mass="50868">MHYHIIGIAGAGMSAIAHILLDQGHTVSGSDVQRNALTEALEQRGALIHDGHDPAWIAGADALVATSAVRDDHVELSAARARGIPVLRRADLWREWSQQRRVVAVAGTHGKTTTTALIALMLTQAGGNPGFLIGGETPDLGIHARWGDPAAPLVVEADEYDRTFLALTPDVAVMTNVEWDHVDIYPSPDNYEAAFRLFTRRVAQPQRLIVCGDDPGALRVANHPDAQQYGIEEAIARNPASCRLAPMDWMAANVRYDGAMTNFDLWRYDRRTFGARLDGTYTMRLVGDHNVRNALAAIAVATLLGVERDAIADALAAYRGARRRFDIKGEANGITIIDDYAHHPTEARATLAAARARFPQRRLVVYLQPHTFSRTQALRDAWADAFDHADVVRIGDVYPARETGDPRTVAHALAGCIRHNDVQAVGNVVEAAATIGGLLRPGDVLLTLGAGDGYRVGELIIDTLRQQN</sequence>
<proteinExistence type="inferred from homology"/>
<evidence type="ECO:0000255" key="1">
    <source>
        <dbReference type="HAMAP-Rule" id="MF_00046"/>
    </source>
</evidence>